<organism>
    <name type="scientific">Dechloromonas aromatica (strain RCB)</name>
    <dbReference type="NCBI Taxonomy" id="159087"/>
    <lineage>
        <taxon>Bacteria</taxon>
        <taxon>Pseudomonadati</taxon>
        <taxon>Pseudomonadota</taxon>
        <taxon>Betaproteobacteria</taxon>
        <taxon>Rhodocyclales</taxon>
        <taxon>Azonexaceae</taxon>
        <taxon>Dechloromonas</taxon>
    </lineage>
</organism>
<proteinExistence type="inferred from homology"/>
<protein>
    <recommendedName>
        <fullName evidence="1">5'-nucleotidase SurE</fullName>
        <ecNumber evidence="1">3.1.3.5</ecNumber>
    </recommendedName>
    <alternativeName>
        <fullName evidence="1">Nucleoside 5'-monophosphate phosphohydrolase</fullName>
    </alternativeName>
</protein>
<sequence length="246" mass="26157">MRILLSNDDGYFAPGLAALAEALDGLGEVVVVAPEQNRSGASNSLTLDRPLLLKKAATGFYFVNGTPTDCVHLAVTGMLDKLPDIIVSGINLGANMGDDTIYSGTVAAATEGYLLGIPSIAISMTSFEGNNFASAARVARELVERFIRNPISEPVLLNVNVPDISYSDLKGTEVTRLGRRHKAEPVVKMQSPRNETVYWVGAAGAAADAGPGTDFNAVERGFVSITPLQIDLTHSAQLSHIDQWMK</sequence>
<dbReference type="EC" id="3.1.3.5" evidence="1"/>
<dbReference type="EMBL" id="CP000089">
    <property type="protein sequence ID" value="AAZ47257.1"/>
    <property type="molecule type" value="Genomic_DNA"/>
</dbReference>
<dbReference type="SMR" id="Q47D24"/>
<dbReference type="STRING" id="159087.Daro_2524"/>
<dbReference type="KEGG" id="dar:Daro_2524"/>
<dbReference type="eggNOG" id="COG0496">
    <property type="taxonomic scope" value="Bacteria"/>
</dbReference>
<dbReference type="HOGENOM" id="CLU_045192_1_2_4"/>
<dbReference type="OrthoDB" id="9780815at2"/>
<dbReference type="GO" id="GO:0005737">
    <property type="term" value="C:cytoplasm"/>
    <property type="evidence" value="ECO:0007669"/>
    <property type="project" value="UniProtKB-SubCell"/>
</dbReference>
<dbReference type="GO" id="GO:0008254">
    <property type="term" value="F:3'-nucleotidase activity"/>
    <property type="evidence" value="ECO:0007669"/>
    <property type="project" value="TreeGrafter"/>
</dbReference>
<dbReference type="GO" id="GO:0008253">
    <property type="term" value="F:5'-nucleotidase activity"/>
    <property type="evidence" value="ECO:0007669"/>
    <property type="project" value="UniProtKB-UniRule"/>
</dbReference>
<dbReference type="GO" id="GO:0004309">
    <property type="term" value="F:exopolyphosphatase activity"/>
    <property type="evidence" value="ECO:0007669"/>
    <property type="project" value="TreeGrafter"/>
</dbReference>
<dbReference type="GO" id="GO:0046872">
    <property type="term" value="F:metal ion binding"/>
    <property type="evidence" value="ECO:0007669"/>
    <property type="project" value="UniProtKB-UniRule"/>
</dbReference>
<dbReference type="GO" id="GO:0000166">
    <property type="term" value="F:nucleotide binding"/>
    <property type="evidence" value="ECO:0007669"/>
    <property type="project" value="UniProtKB-KW"/>
</dbReference>
<dbReference type="FunFam" id="3.40.1210.10:FF:000001">
    <property type="entry name" value="5'/3'-nucleotidase SurE"/>
    <property type="match status" value="1"/>
</dbReference>
<dbReference type="Gene3D" id="3.40.1210.10">
    <property type="entry name" value="Survival protein SurE-like phosphatase/nucleotidase"/>
    <property type="match status" value="1"/>
</dbReference>
<dbReference type="HAMAP" id="MF_00060">
    <property type="entry name" value="SurE"/>
    <property type="match status" value="1"/>
</dbReference>
<dbReference type="InterPro" id="IPR030048">
    <property type="entry name" value="SurE"/>
</dbReference>
<dbReference type="InterPro" id="IPR002828">
    <property type="entry name" value="SurE-like_Pase/nucleotidase"/>
</dbReference>
<dbReference type="InterPro" id="IPR036523">
    <property type="entry name" value="SurE-like_sf"/>
</dbReference>
<dbReference type="NCBIfam" id="NF001489">
    <property type="entry name" value="PRK00346.1-3"/>
    <property type="match status" value="1"/>
</dbReference>
<dbReference type="NCBIfam" id="NF001490">
    <property type="entry name" value="PRK00346.1-4"/>
    <property type="match status" value="1"/>
</dbReference>
<dbReference type="NCBIfam" id="TIGR00087">
    <property type="entry name" value="surE"/>
    <property type="match status" value="1"/>
</dbReference>
<dbReference type="PANTHER" id="PTHR30457">
    <property type="entry name" value="5'-NUCLEOTIDASE SURE"/>
    <property type="match status" value="1"/>
</dbReference>
<dbReference type="PANTHER" id="PTHR30457:SF12">
    <property type="entry name" value="5'_3'-NUCLEOTIDASE SURE"/>
    <property type="match status" value="1"/>
</dbReference>
<dbReference type="Pfam" id="PF01975">
    <property type="entry name" value="SurE"/>
    <property type="match status" value="1"/>
</dbReference>
<dbReference type="SUPFAM" id="SSF64167">
    <property type="entry name" value="SurE-like"/>
    <property type="match status" value="1"/>
</dbReference>
<keyword id="KW-0963">Cytoplasm</keyword>
<keyword id="KW-0378">Hydrolase</keyword>
<keyword id="KW-0479">Metal-binding</keyword>
<keyword id="KW-0547">Nucleotide-binding</keyword>
<reference key="1">
    <citation type="journal article" date="2009" name="BMC Genomics">
        <title>Metabolic analysis of the soil microbe Dechloromonas aromatica str. RCB: indications of a surprisingly complex life-style and cryptic anaerobic pathways for aromatic degradation.</title>
        <authorList>
            <person name="Salinero K.K."/>
            <person name="Keller K."/>
            <person name="Feil W.S."/>
            <person name="Feil H."/>
            <person name="Trong S."/>
            <person name="Di Bartolo G."/>
            <person name="Lapidus A."/>
        </authorList>
    </citation>
    <scope>NUCLEOTIDE SEQUENCE [LARGE SCALE GENOMIC DNA]</scope>
    <source>
        <strain>RCB</strain>
    </source>
</reference>
<accession>Q47D24</accession>
<name>SURE_DECAR</name>
<gene>
    <name evidence="1" type="primary">surE</name>
    <name type="ordered locus">Daro_2524</name>
</gene>
<comment type="function">
    <text evidence="1">Nucleotidase that shows phosphatase activity on nucleoside 5'-monophosphates.</text>
</comment>
<comment type="catalytic activity">
    <reaction evidence="1">
        <text>a ribonucleoside 5'-phosphate + H2O = a ribonucleoside + phosphate</text>
        <dbReference type="Rhea" id="RHEA:12484"/>
        <dbReference type="ChEBI" id="CHEBI:15377"/>
        <dbReference type="ChEBI" id="CHEBI:18254"/>
        <dbReference type="ChEBI" id="CHEBI:43474"/>
        <dbReference type="ChEBI" id="CHEBI:58043"/>
        <dbReference type="EC" id="3.1.3.5"/>
    </reaction>
</comment>
<comment type="cofactor">
    <cofactor evidence="1">
        <name>a divalent metal cation</name>
        <dbReference type="ChEBI" id="CHEBI:60240"/>
    </cofactor>
    <text evidence="1">Binds 1 divalent metal cation per subunit.</text>
</comment>
<comment type="subcellular location">
    <subcellularLocation>
        <location evidence="1">Cytoplasm</location>
    </subcellularLocation>
</comment>
<comment type="similarity">
    <text evidence="1">Belongs to the SurE nucleotidase family.</text>
</comment>
<feature type="chain" id="PRO_0000235608" description="5'-nucleotidase SurE">
    <location>
        <begin position="1"/>
        <end position="246"/>
    </location>
</feature>
<feature type="binding site" evidence="1">
    <location>
        <position position="8"/>
    </location>
    <ligand>
        <name>a divalent metal cation</name>
        <dbReference type="ChEBI" id="CHEBI:60240"/>
    </ligand>
</feature>
<feature type="binding site" evidence="1">
    <location>
        <position position="9"/>
    </location>
    <ligand>
        <name>a divalent metal cation</name>
        <dbReference type="ChEBI" id="CHEBI:60240"/>
    </ligand>
</feature>
<feature type="binding site" evidence="1">
    <location>
        <position position="39"/>
    </location>
    <ligand>
        <name>a divalent metal cation</name>
        <dbReference type="ChEBI" id="CHEBI:60240"/>
    </ligand>
</feature>
<feature type="binding site" evidence="1">
    <location>
        <position position="91"/>
    </location>
    <ligand>
        <name>a divalent metal cation</name>
        <dbReference type="ChEBI" id="CHEBI:60240"/>
    </ligand>
</feature>
<evidence type="ECO:0000255" key="1">
    <source>
        <dbReference type="HAMAP-Rule" id="MF_00060"/>
    </source>
</evidence>